<comment type="function">
    <text evidence="2 5 6 7 10">Adapter or scaffold protein which participates in the assembly of numerous protein complexes and is involved in several cellular processes such as cell fate determination, cytoskeletal organization, repression of gene transcription, cell-cell adhesion, cell differentiation, proliferation and migration. Positively regulates microRNA (miRNA)-mediated gene silencing. Negatively regulates Hippo signaling pathway and antagonizes phosphorylation of YAP1. Acts as a transcriptional corepressor for SNAI1 and SNAI2/SLUG-dependent repression of E-cadherin transcription. Acts as a hypoxic regulator by bridging an association between the prolyl hydroxylases and VHL enabling efficient degradation of HIF1A. In podocytes, may play a role in the regulation of actin dynamics and/or foot process cytoarchitecture. In the course of podocyte injury, shuttles into the nucleus and acts as a transcription regulator that represses WT1-dependent transcription regulation, thereby translating changes in slit diaphragm structure into altered gene expression and a less differentiated phenotype. Involved in the organization of the basal body (By similarity). Involved in cilia growth and positioning (By similarity).</text>
</comment>
<comment type="subunit">
    <text evidence="1 2 5 8 9 10">Forms homodimers. Interacts with EIF4E, AGO1, AGO2, DCP2, DDX6, LATS1, LATS2, SAV1, EGLN2/PHD1 and EGLN3/PHD3. Interacts (via LIM domains) with VHL (By similarity). Interacts with CD2AP and WT1. Interacts (via LIM domains) with SNAI1 (via SNAG domain), SNAI2/SLUG (via SNAG domain) and SCRT1 (via SNAG domain). Interacts with ROR2. Following treatment with bacterial lipopolysaccharide (LPS), forms a complex with MAPK8IP3 and dynein intermediate chain. Interacts with PRICKLE3 (By similarity).</text>
</comment>
<comment type="subcellular location">
    <subcellularLocation>
        <location>Cell junction</location>
        <location>Focal adhesion</location>
    </subcellularLocation>
    <subcellularLocation>
        <location>Cell junction</location>
        <location>Adherens junction</location>
    </subcellularLocation>
    <subcellularLocation>
        <location>Nucleus</location>
    </subcellularLocation>
    <subcellularLocation>
        <location>Cytoplasm</location>
        <location>Cytosol</location>
    </subcellularLocation>
    <subcellularLocation>
        <location>Cell membrane</location>
    </subcellularLocation>
    <text evidence="1">In adherent but isolated podocytes, targets to focal adhesions and then shifts to adherens junctions after cells make homotypic contacts. Following podocyte injury, caused by treatment with LPS, puromycin aminonucleoside, ultraviolet or hydrogen peroxide, translocates from sites of cell-cell contacts into the cytosol and nucleus. Maximal nuclear localization is achieved 6 hours after LPS treatment. Nuclear translocation requires dynein motor activity and intact microtubule network (By similarity). Returns to cell-cell contacts several hours after LPS stimulation. In the presence of ROR2, localizes to the plasma membrane.</text>
</comment>
<comment type="tissue specificity">
    <text evidence="5 10">Expressed in kidney, lung, eye and ovary. In kidney, restricted to podocytes.</text>
</comment>
<comment type="developmental stage">
    <text evidence="5 9">From 9.5 to 11.5 dpc, expressed in the branchial arches, otic vesicle, limb buds, somites, craniofacial mesenchyme and tail buds. At 14.5 dpc, expressed in the developing tongue, nasal cavity, palate, adrenal gland, in the forebrain, dorsal root ganglia and in the somites. At 14.5 dpc, also detected in lung, rib cartilage, kidney and intestine (at protein level). In the kidney, expression peaks at 15 to 16 dpc and decreases thereafter, but persists in adulthood.</text>
</comment>
<comment type="similarity">
    <text evidence="11">Belongs to the zyxin/ajuba family.</text>
</comment>
<dbReference type="EMBL" id="BX539331">
    <property type="status" value="NOT_ANNOTATED_CDS"/>
    <property type="molecule type" value="Genomic_DNA"/>
</dbReference>
<dbReference type="EMBL" id="BC042762">
    <property type="protein sequence ID" value="AAH42762.1"/>
    <property type="molecule type" value="mRNA"/>
</dbReference>
<dbReference type="EMBL" id="BC054125">
    <property type="protein sequence ID" value="AAH54125.1"/>
    <property type="molecule type" value="mRNA"/>
</dbReference>
<dbReference type="CCDS" id="CCDS21135.1"/>
<dbReference type="RefSeq" id="NP_997095.1">
    <property type="nucleotide sequence ID" value="NM_207212.3"/>
</dbReference>
<dbReference type="BioGRID" id="221684">
    <property type="interactions" value="1"/>
</dbReference>
<dbReference type="CORUM" id="Q7TQJ8"/>
<dbReference type="DIP" id="DIP-59507N"/>
<dbReference type="FunCoup" id="Q7TQJ8">
    <property type="interactions" value="187"/>
</dbReference>
<dbReference type="IntAct" id="Q7TQJ8">
    <property type="interactions" value="5"/>
</dbReference>
<dbReference type="MINT" id="Q7TQJ8"/>
<dbReference type="STRING" id="10090.ENSMUSP00000047623"/>
<dbReference type="iPTMnet" id="Q7TQJ8"/>
<dbReference type="PhosphoSitePlus" id="Q7TQJ8"/>
<dbReference type="jPOST" id="Q7TQJ8"/>
<dbReference type="PaxDb" id="10090-ENSMUSP00000047623"/>
<dbReference type="PeptideAtlas" id="Q7TQJ8"/>
<dbReference type="ProteomicsDB" id="299776"/>
<dbReference type="Pumba" id="Q7TQJ8"/>
<dbReference type="Antibodypedia" id="56892">
    <property type="antibodies" value="66 antibodies from 12 providers"/>
</dbReference>
<dbReference type="DNASU" id="101543"/>
<dbReference type="Ensembl" id="ENSMUST00000038537.9">
    <property type="protein sequence ID" value="ENSMUSP00000047623.9"/>
    <property type="gene ID" value="ENSMUSG00000036459.16"/>
</dbReference>
<dbReference type="GeneID" id="101543"/>
<dbReference type="KEGG" id="mmu:101543"/>
<dbReference type="UCSC" id="uc009gis.2">
    <property type="organism name" value="mouse"/>
</dbReference>
<dbReference type="AGR" id="MGI:2141920"/>
<dbReference type="CTD" id="126374"/>
<dbReference type="MGI" id="MGI:2141920">
    <property type="gene designation" value="Wtip"/>
</dbReference>
<dbReference type="VEuPathDB" id="HostDB:ENSMUSG00000036459"/>
<dbReference type="eggNOG" id="KOG1701">
    <property type="taxonomic scope" value="Eukaryota"/>
</dbReference>
<dbReference type="GeneTree" id="ENSGT00940000160924"/>
<dbReference type="HOGENOM" id="CLU_001357_11_3_1"/>
<dbReference type="InParanoid" id="Q7TQJ8"/>
<dbReference type="OMA" id="RELEPGC"/>
<dbReference type="OrthoDB" id="25414at2759"/>
<dbReference type="PhylomeDB" id="Q7TQJ8"/>
<dbReference type="TreeFam" id="TF320310"/>
<dbReference type="Reactome" id="R-MMU-1234176">
    <property type="pathway name" value="Oxygen-dependent proline hydroxylation of Hypoxia-inducible Factor Alpha"/>
</dbReference>
<dbReference type="BioGRID-ORCS" id="101543">
    <property type="hits" value="1 hit in 76 CRISPR screens"/>
</dbReference>
<dbReference type="ChiTaRS" id="Wtip">
    <property type="organism name" value="mouse"/>
</dbReference>
<dbReference type="PRO" id="PR:Q7TQJ8"/>
<dbReference type="Proteomes" id="UP000000589">
    <property type="component" value="Chromosome 7"/>
</dbReference>
<dbReference type="RNAct" id="Q7TQJ8">
    <property type="molecule type" value="protein"/>
</dbReference>
<dbReference type="Bgee" id="ENSMUSG00000036459">
    <property type="expression patterns" value="Expressed in external carotid artery and 217 other cell types or tissues"/>
</dbReference>
<dbReference type="ExpressionAtlas" id="Q7TQJ8">
    <property type="expression patterns" value="baseline and differential"/>
</dbReference>
<dbReference type="GO" id="GO:0005912">
    <property type="term" value="C:adherens junction"/>
    <property type="evidence" value="ECO:0007669"/>
    <property type="project" value="UniProtKB-SubCell"/>
</dbReference>
<dbReference type="GO" id="GO:0005829">
    <property type="term" value="C:cytosol"/>
    <property type="evidence" value="ECO:0007669"/>
    <property type="project" value="UniProtKB-SubCell"/>
</dbReference>
<dbReference type="GO" id="GO:0005925">
    <property type="term" value="C:focal adhesion"/>
    <property type="evidence" value="ECO:0007669"/>
    <property type="project" value="UniProtKB-SubCell"/>
</dbReference>
<dbReference type="GO" id="GO:0005634">
    <property type="term" value="C:nucleus"/>
    <property type="evidence" value="ECO:0007669"/>
    <property type="project" value="UniProtKB-SubCell"/>
</dbReference>
<dbReference type="GO" id="GO:0000932">
    <property type="term" value="C:P-body"/>
    <property type="evidence" value="ECO:0000266"/>
    <property type="project" value="MGI"/>
</dbReference>
<dbReference type="GO" id="GO:0005886">
    <property type="term" value="C:plasma membrane"/>
    <property type="evidence" value="ECO:0007669"/>
    <property type="project" value="UniProtKB-SubCell"/>
</dbReference>
<dbReference type="GO" id="GO:0046872">
    <property type="term" value="F:metal ion binding"/>
    <property type="evidence" value="ECO:0007669"/>
    <property type="project" value="UniProtKB-KW"/>
</dbReference>
<dbReference type="GO" id="GO:0003714">
    <property type="term" value="F:transcription corepressor activity"/>
    <property type="evidence" value="ECO:0000314"/>
    <property type="project" value="UniProtKB"/>
</dbReference>
<dbReference type="GO" id="GO:0030030">
    <property type="term" value="P:cell projection organization"/>
    <property type="evidence" value="ECO:0007669"/>
    <property type="project" value="UniProtKB-KW"/>
</dbReference>
<dbReference type="GO" id="GO:0007010">
    <property type="term" value="P:cytoskeleton organization"/>
    <property type="evidence" value="ECO:0000250"/>
    <property type="project" value="UniProtKB"/>
</dbReference>
<dbReference type="GO" id="GO:0035278">
    <property type="term" value="P:miRNA-mediated gene silencing by inhibition of translation"/>
    <property type="evidence" value="ECO:0000250"/>
    <property type="project" value="UniProtKB"/>
</dbReference>
<dbReference type="GO" id="GO:0035195">
    <property type="term" value="P:miRNA-mediated post-transcriptional gene silencing"/>
    <property type="evidence" value="ECO:0000266"/>
    <property type="project" value="MGI"/>
</dbReference>
<dbReference type="GO" id="GO:0035331">
    <property type="term" value="P:negative regulation of hippo signaling"/>
    <property type="evidence" value="ECO:0000250"/>
    <property type="project" value="UniProtKB"/>
</dbReference>
<dbReference type="GO" id="GO:0022604">
    <property type="term" value="P:regulation of cell morphogenesis"/>
    <property type="evidence" value="ECO:0000250"/>
    <property type="project" value="UniProtKB"/>
</dbReference>
<dbReference type="GO" id="GO:0001666">
    <property type="term" value="P:response to hypoxia"/>
    <property type="evidence" value="ECO:0007669"/>
    <property type="project" value="Ensembl"/>
</dbReference>
<dbReference type="CDD" id="cd09352">
    <property type="entry name" value="LIM1_Ajuba_like"/>
    <property type="match status" value="1"/>
</dbReference>
<dbReference type="CDD" id="cd09355">
    <property type="entry name" value="LIM2_Ajuba_like"/>
    <property type="match status" value="1"/>
</dbReference>
<dbReference type="CDD" id="cd09438">
    <property type="entry name" value="LIM3_Ajuba_like"/>
    <property type="match status" value="1"/>
</dbReference>
<dbReference type="FunFam" id="2.10.110.10:FF:000028">
    <property type="entry name" value="LIM domain-containing protein 1"/>
    <property type="match status" value="1"/>
</dbReference>
<dbReference type="FunFam" id="2.10.110.10:FF:000036">
    <property type="entry name" value="LIM domain-containing protein 1"/>
    <property type="match status" value="1"/>
</dbReference>
<dbReference type="FunFam" id="2.10.110.10:FF:000037">
    <property type="entry name" value="LIM domain-containing protein 1"/>
    <property type="match status" value="1"/>
</dbReference>
<dbReference type="Gene3D" id="2.10.110.10">
    <property type="entry name" value="Cysteine Rich Protein"/>
    <property type="match status" value="3"/>
</dbReference>
<dbReference type="InterPro" id="IPR047172">
    <property type="entry name" value="Ajuba-like"/>
</dbReference>
<dbReference type="InterPro" id="IPR047245">
    <property type="entry name" value="Ajuba-like_LIM1"/>
</dbReference>
<dbReference type="InterPro" id="IPR047247">
    <property type="entry name" value="Ajuba-like_LIM2"/>
</dbReference>
<dbReference type="InterPro" id="IPR047248">
    <property type="entry name" value="Ajuba-like_LIM3"/>
</dbReference>
<dbReference type="InterPro" id="IPR001781">
    <property type="entry name" value="Znf_LIM"/>
</dbReference>
<dbReference type="PANTHER" id="PTHR24219">
    <property type="entry name" value="LIM DOMAIN-CONTAINING PROTEIN JUB"/>
    <property type="match status" value="1"/>
</dbReference>
<dbReference type="PANTHER" id="PTHR24219:SF6">
    <property type="entry name" value="WILMS TUMOR PROTEIN 1-INTERACTING PROTEIN"/>
    <property type="match status" value="1"/>
</dbReference>
<dbReference type="Pfam" id="PF00412">
    <property type="entry name" value="LIM"/>
    <property type="match status" value="3"/>
</dbReference>
<dbReference type="SMART" id="SM00132">
    <property type="entry name" value="LIM"/>
    <property type="match status" value="3"/>
</dbReference>
<dbReference type="SUPFAM" id="SSF57716">
    <property type="entry name" value="Glucocorticoid receptor-like (DNA-binding domain)"/>
    <property type="match status" value="2"/>
</dbReference>
<dbReference type="PROSITE" id="PS00478">
    <property type="entry name" value="LIM_DOMAIN_1"/>
    <property type="match status" value="2"/>
</dbReference>
<dbReference type="PROSITE" id="PS50023">
    <property type="entry name" value="LIM_DOMAIN_2"/>
    <property type="match status" value="3"/>
</dbReference>
<gene>
    <name type="primary">Wtip</name>
</gene>
<feature type="chain" id="PRO_0000328861" description="Wilms tumor protein 1-interacting protein">
    <location>
        <begin position="1"/>
        <end position="398"/>
    </location>
</feature>
<feature type="domain" description="LIM zinc-binding 1" evidence="3">
    <location>
        <begin position="191"/>
        <end position="252"/>
    </location>
</feature>
<feature type="domain" description="LIM zinc-binding 2" evidence="3">
    <location>
        <begin position="256"/>
        <end position="315"/>
    </location>
</feature>
<feature type="domain" description="LIM zinc-binding 3" evidence="3">
    <location>
        <begin position="316"/>
        <end position="385"/>
    </location>
</feature>
<feature type="region of interest" description="Disordered" evidence="4">
    <location>
        <begin position="16"/>
        <end position="166"/>
    </location>
</feature>
<feature type="compositionally biased region" description="Low complexity" evidence="4">
    <location>
        <begin position="74"/>
        <end position="90"/>
    </location>
</feature>
<feature type="compositionally biased region" description="Low complexity" evidence="4">
    <location>
        <begin position="106"/>
        <end position="124"/>
    </location>
</feature>
<feature type="compositionally biased region" description="Pro residues" evidence="4">
    <location>
        <begin position="132"/>
        <end position="157"/>
    </location>
</feature>
<organism>
    <name type="scientific">Mus musculus</name>
    <name type="common">Mouse</name>
    <dbReference type="NCBI Taxonomy" id="10090"/>
    <lineage>
        <taxon>Eukaryota</taxon>
        <taxon>Metazoa</taxon>
        <taxon>Chordata</taxon>
        <taxon>Craniata</taxon>
        <taxon>Vertebrata</taxon>
        <taxon>Euteleostomi</taxon>
        <taxon>Mammalia</taxon>
        <taxon>Eutheria</taxon>
        <taxon>Euarchontoglires</taxon>
        <taxon>Glires</taxon>
        <taxon>Rodentia</taxon>
        <taxon>Myomorpha</taxon>
        <taxon>Muroidea</taxon>
        <taxon>Muridae</taxon>
        <taxon>Murinae</taxon>
        <taxon>Mus</taxon>
        <taxon>Mus</taxon>
    </lineage>
</organism>
<sequence length="398" mass="42254">MQRSRTAADDAALLLAGLGLRESEPTAGSPGRVRRGPRAVDEAAPASGRRGKGGCGGPEAAPDVPSRPERGPRASLAGSDGGSARSSGISLGYDQRHGPGPGPPSGGSARSSVSSLGSRGSAGACADLLPPGVGPAPARSPEPAQFPFPLPSLPLPPGREGGPSAAERRLEALTRELERALEARTARDYFGICIKCGLGIYGARQACQAMGSLYHTDCFICDSCGRRLRGKAFYNVGEKVYCQEDFLYSGFQQTADKCSVCGHLIMEMILQALGKSYHPGCFRCSVCNECLDGVPFTVDVDNNIYCVRDYHTVFAPKCASCARPILPAQGCETTIRVVSMDRDYHVECYHCEDCGLQLSGEEGRRCYPLEGHLLCRRCHLRRLGQGPLPSPAVHVTEL</sequence>
<keyword id="KW-0965">Cell junction</keyword>
<keyword id="KW-1003">Cell membrane</keyword>
<keyword id="KW-0970">Cilium biogenesis/degradation</keyword>
<keyword id="KW-0963">Cytoplasm</keyword>
<keyword id="KW-0440">LIM domain</keyword>
<keyword id="KW-0472">Membrane</keyword>
<keyword id="KW-0479">Metal-binding</keyword>
<keyword id="KW-0539">Nucleus</keyword>
<keyword id="KW-1185">Reference proteome</keyword>
<keyword id="KW-0677">Repeat</keyword>
<keyword id="KW-0678">Repressor</keyword>
<keyword id="KW-0943">RNA-mediated gene silencing</keyword>
<keyword id="KW-0804">Transcription</keyword>
<keyword id="KW-0805">Transcription regulation</keyword>
<keyword id="KW-0862">Zinc</keyword>
<name>WTIP_MOUSE</name>
<reference key="1">
    <citation type="journal article" date="2009" name="PLoS Biol.">
        <title>Lineage-specific biology revealed by a finished genome assembly of the mouse.</title>
        <authorList>
            <person name="Church D.M."/>
            <person name="Goodstadt L."/>
            <person name="Hillier L.W."/>
            <person name="Zody M.C."/>
            <person name="Goldstein S."/>
            <person name="She X."/>
            <person name="Bult C.J."/>
            <person name="Agarwala R."/>
            <person name="Cherry J.L."/>
            <person name="DiCuccio M."/>
            <person name="Hlavina W."/>
            <person name="Kapustin Y."/>
            <person name="Meric P."/>
            <person name="Maglott D."/>
            <person name="Birtle Z."/>
            <person name="Marques A.C."/>
            <person name="Graves T."/>
            <person name="Zhou S."/>
            <person name="Teague B."/>
            <person name="Potamousis K."/>
            <person name="Churas C."/>
            <person name="Place M."/>
            <person name="Herschleb J."/>
            <person name="Runnheim R."/>
            <person name="Forrest D."/>
            <person name="Amos-Landgraf J."/>
            <person name="Schwartz D.C."/>
            <person name="Cheng Z."/>
            <person name="Lindblad-Toh K."/>
            <person name="Eichler E.E."/>
            <person name="Ponting C.P."/>
        </authorList>
    </citation>
    <scope>NUCLEOTIDE SEQUENCE [LARGE SCALE GENOMIC DNA]</scope>
    <source>
        <strain>C57BL/6J</strain>
    </source>
</reference>
<reference key="2">
    <citation type="journal article" date="2004" name="Genome Res.">
        <title>The status, quality, and expansion of the NIH full-length cDNA project: the Mammalian Gene Collection (MGC).</title>
        <authorList>
            <consortium name="The MGC Project Team"/>
        </authorList>
    </citation>
    <scope>NUCLEOTIDE SEQUENCE [LARGE SCALE MRNA]</scope>
    <source>
        <tissue>Limb</tissue>
    </source>
</reference>
<reference key="3">
    <citation type="journal article" date="2004" name="J. Biol. Chem.">
        <title>A WT1 co-regulator controls podocyte phenotype by shuttling between adhesion structures and nucleus.</title>
        <authorList>
            <person name="Srichai M.B."/>
            <person name="Konieczkowski M."/>
            <person name="Padiyar A."/>
            <person name="Konieczkowski D.J."/>
            <person name="Mukherjee A."/>
            <person name="Hayden P.S."/>
            <person name="Kamat S."/>
            <person name="El-Meanawy M.A."/>
            <person name="Khan S."/>
            <person name="Mundel P."/>
            <person name="Lee S.B."/>
            <person name="Bruggeman L.A."/>
            <person name="Schelling J.R."/>
            <person name="Sedor J.R."/>
        </authorList>
    </citation>
    <scope>FUNCTION</scope>
    <scope>SUBCELLULAR LOCATION</scope>
    <scope>TISSUE SPECIFICITY</scope>
    <scope>DEVELOPMENTAL STAGE</scope>
    <scope>INTERACTION WITH WT1 AND CD2AP</scope>
</reference>
<reference key="4">
    <citation type="journal article" date="2005" name="Am. J. Physiol.">
        <title>WT1-interacting protein and ZO-1 translocate into podocyte nuclei after puromycin aminonucleoside treatment.</title>
        <authorList>
            <person name="Rico M."/>
            <person name="Mukherjee A."/>
            <person name="Konieczkowski M."/>
            <person name="Bruggeman L.A."/>
            <person name="Miller R.T."/>
            <person name="Khan S."/>
            <person name="Schelling J.R."/>
            <person name="Sedor J.R."/>
        </authorList>
    </citation>
    <scope>FUNCTION</scope>
    <scope>SUBCELLULAR LOCATION</scope>
</reference>
<reference key="5">
    <citation type="journal article" date="2007" name="Cancer Res.">
        <title>The Ajuba LIM domain protein is a corepressor for SNAG domain mediated repression and participates in nucleocytoplasmic Shuttling.</title>
        <authorList>
            <person name="Ayyanathan K."/>
            <person name="Peng H."/>
            <person name="Hou Z."/>
            <person name="Fredericks W.J."/>
            <person name="Goyal R.K."/>
            <person name="Langer E.M."/>
            <person name="Longmore G.D."/>
            <person name="Rauscher F.J. III"/>
        </authorList>
    </citation>
    <scope>FUNCTION</scope>
</reference>
<reference key="6">
    <citation type="journal article" date="2008" name="Dev. Cell">
        <title>Ajuba LIM proteins are snail/slug corepressors required for neural crest development in Xenopus.</title>
        <authorList>
            <person name="Langer E.M."/>
            <person name="Feng Y."/>
            <person name="Zhaoyuan H."/>
            <person name="Rauscher F.J. III"/>
            <person name="Kroll K.L."/>
            <person name="Longmore G.D."/>
        </authorList>
    </citation>
    <scope>INTERACTION WITH SNAI1; SNAI2/SLUG AND SCRT1</scope>
</reference>
<reference key="7">
    <citation type="journal article" date="2009" name="Biochem. Biophys. Res. Commun.">
        <title>The LIM domain protein Wtip interacts with the receptor tyrosine kinase Ror2 and inhibits canonical Wnt signalling.</title>
        <authorList>
            <person name="van Wijk N.V."/>
            <person name="Witte F."/>
            <person name="Feike A.C."/>
            <person name="Schambony A."/>
            <person name="Birchmeier W."/>
            <person name="Mundlos S."/>
            <person name="Stricker S."/>
        </authorList>
    </citation>
    <scope>INTERACTION WITH ROR2</scope>
    <scope>HOMODIMERIZATION</scope>
    <scope>SUBCELLULAR LOCATION</scope>
    <scope>DEVELOPMENTAL STAGE</scope>
</reference>
<reference key="8">
    <citation type="journal article" date="2010" name="J. Biol. Chem.">
        <title>Podocyte injury induces nuclear translocation of WTIP via microtubule-dependent transport.</title>
        <authorList>
            <person name="Kim J.H."/>
            <person name="Konieczkowski M."/>
            <person name="Mukherjee A."/>
            <person name="Schechtman S."/>
            <person name="Khan S."/>
            <person name="Schelling J.R."/>
            <person name="Ross M.D."/>
            <person name="Bruggeman L.A."/>
            <person name="Sedor J.R."/>
        </authorList>
    </citation>
    <scope>FUNCTION</scope>
    <scope>SUBCELLULAR LOCATION</scope>
    <scope>INTERACTION WITH MAPK8IP3 AND DYNEIN INTERMEDIATE CHAIN</scope>
    <scope>TISSUE SPECIFICITY</scope>
</reference>
<reference key="9">
    <citation type="journal article" date="2012" name="Am. J. Physiol.">
        <title>WT1-interacting protein (Wtip) regulates podocyte phenotype by cell-cell and cell-matrix contact reorganization.</title>
        <authorList>
            <person name="Kim J.H."/>
            <person name="Mukherjee A."/>
            <person name="Madhavan S.M."/>
            <person name="Konieczkowski M."/>
            <person name="Sedor J.R."/>
        </authorList>
    </citation>
    <scope>SUBCELLULAR LOCATION</scope>
</reference>
<proteinExistence type="evidence at protein level"/>
<accession>Q7TQJ8</accession>
<accession>Q8CG89</accession>
<evidence type="ECO:0000250" key="1"/>
<evidence type="ECO:0000250" key="2">
    <source>
        <dbReference type="UniProtKB" id="A9LS46"/>
    </source>
</evidence>
<evidence type="ECO:0000255" key="3">
    <source>
        <dbReference type="PROSITE-ProRule" id="PRU00125"/>
    </source>
</evidence>
<evidence type="ECO:0000256" key="4">
    <source>
        <dbReference type="SAM" id="MobiDB-lite"/>
    </source>
</evidence>
<evidence type="ECO:0000269" key="5">
    <source>
    </source>
</evidence>
<evidence type="ECO:0000269" key="6">
    <source>
    </source>
</evidence>
<evidence type="ECO:0000269" key="7">
    <source>
    </source>
</evidence>
<evidence type="ECO:0000269" key="8">
    <source>
    </source>
</evidence>
<evidence type="ECO:0000269" key="9">
    <source>
    </source>
</evidence>
<evidence type="ECO:0000269" key="10">
    <source>
    </source>
</evidence>
<evidence type="ECO:0000305" key="11"/>
<protein>
    <recommendedName>
        <fullName>Wilms tumor protein 1-interacting protein</fullName>
        <shortName>WT1-interacting protein</shortName>
    </recommendedName>
</protein>